<gene>
    <name type="primary">H2B.8</name>
    <name type="ordered locus">Os01g0152700</name>
    <name type="ordered locus">LOC_Os01g05950</name>
    <name type="ORF">OsJ_000402</name>
    <name type="ORF">P0009G03.35</name>
    <name type="ORF">P0030H07.14</name>
</gene>
<name>H2B8_ORYSJ</name>
<comment type="function">
    <text>Core component of nucleosome. Nucleosomes wrap and compact DNA into chromatin, limiting DNA accessibility to the cellular machineries which require DNA as a template. Histones thereby play a central role in transcription regulation, DNA repair, DNA replication and chromosomal stability. DNA accessibility is regulated via a complex set of post-translational modifications of histones, also called histone code, and nucleosome remodeling.</text>
</comment>
<comment type="subunit">
    <text>The nucleosome is a histone octamer containing two molecules each of H2A, H2B, H3 and H4 assembled in one H3-H4 heterotetramer and two H2A-H2B heterodimers. The octamer wraps approximately 147 bp of DNA.</text>
</comment>
<comment type="subcellular location">
    <subcellularLocation>
        <location evidence="1">Nucleus</location>
    </subcellularLocation>
    <subcellularLocation>
        <location evidence="1">Chromosome</location>
    </subcellularLocation>
</comment>
<comment type="PTM">
    <text evidence="1">Can be acetylated to form H2BK6ac and H2BK33ac.</text>
</comment>
<comment type="PTM">
    <text evidence="1">Monoubiquitinated by BRE1 to form H2BK143ub1 and deubiquitinated by UBP26. Required for heterochromatic histone H3 di- and trimethylation at H3K4me. May give a specific tag for epigenetic transcriptional activation (By similarity).</text>
</comment>
<comment type="similarity">
    <text evidence="3">Belongs to the histone H2B family.</text>
</comment>
<comment type="caution">
    <text evidence="3">To ensure consistency between histone entries, we follow the 'Brno' nomenclature for histone modifications, with positions referring to those used in the literature for the 'closest' model organism. Due to slight variations in histone sequences between organisms and to the presence of initiator methionine in UniProtKB/Swiss-Prot sequences, the actual positions of modified amino acids in the sequence generally differ. In this entry the following conventions are used: H2BK6ac = acetylated Lys-7; H2BK33ac = acetylated Lys-37; H2BK143ub1 = monoubiquitinated Lys-149.</text>
</comment>
<feature type="initiator methionine" description="Removed" evidence="1">
    <location>
        <position position="1"/>
    </location>
</feature>
<feature type="chain" id="PRO_0000294191" description="Histone H2B.8">
    <location>
        <begin position="2"/>
        <end position="153"/>
    </location>
</feature>
<feature type="region of interest" description="Disordered" evidence="2">
    <location>
        <begin position="1"/>
        <end position="61"/>
    </location>
</feature>
<feature type="compositionally biased region" description="Basic and acidic residues" evidence="2">
    <location>
        <begin position="1"/>
        <end position="28"/>
    </location>
</feature>
<feature type="compositionally biased region" description="Basic and acidic residues" evidence="2">
    <location>
        <begin position="36"/>
        <end position="53"/>
    </location>
</feature>
<feature type="modified residue" description="N6-acetyllysine" evidence="1">
    <location>
        <position position="7"/>
    </location>
</feature>
<feature type="modified residue" description="N6-acetyllysine" evidence="1">
    <location>
        <position position="37"/>
    </location>
</feature>
<feature type="cross-link" description="Glycyl lysine isopeptide (Lys-Gly) (interchain with G-Cter in ubiquitin)" evidence="1">
    <location>
        <position position="149"/>
    </location>
</feature>
<proteinExistence type="inferred from homology"/>
<dbReference type="EMBL" id="AP002522">
    <property type="protein sequence ID" value="BAB03628.1"/>
    <property type="molecule type" value="Genomic_DNA"/>
</dbReference>
<dbReference type="EMBL" id="AP003045">
    <property type="protein sequence ID" value="BAB44049.1"/>
    <property type="molecule type" value="Genomic_DNA"/>
</dbReference>
<dbReference type="EMBL" id="AP014957">
    <property type="status" value="NOT_ANNOTATED_CDS"/>
    <property type="molecule type" value="Genomic_DNA"/>
</dbReference>
<dbReference type="EMBL" id="CM000138">
    <property type="protein sequence ID" value="EAZ10577.1"/>
    <property type="molecule type" value="Genomic_DNA"/>
</dbReference>
<dbReference type="RefSeq" id="XP_015621426.1">
    <property type="nucleotide sequence ID" value="XM_015765940.1"/>
</dbReference>
<dbReference type="SMR" id="Q9LGH8"/>
<dbReference type="FunCoup" id="Q9LGH8">
    <property type="interactions" value="1412"/>
</dbReference>
<dbReference type="STRING" id="39947.Q9LGH8"/>
<dbReference type="PaxDb" id="39947-Q9LGH8"/>
<dbReference type="InParanoid" id="Q9LGH8"/>
<dbReference type="Proteomes" id="UP000000763">
    <property type="component" value="Chromosome 1"/>
</dbReference>
<dbReference type="Proteomes" id="UP000007752">
    <property type="component" value="Chromosome 1"/>
</dbReference>
<dbReference type="Proteomes" id="UP000059680">
    <property type="component" value="Chromosome 1"/>
</dbReference>
<dbReference type="GO" id="GO:0000786">
    <property type="term" value="C:nucleosome"/>
    <property type="evidence" value="ECO:0007669"/>
    <property type="project" value="UniProtKB-KW"/>
</dbReference>
<dbReference type="GO" id="GO:0005634">
    <property type="term" value="C:nucleus"/>
    <property type="evidence" value="ECO:0007669"/>
    <property type="project" value="UniProtKB-SubCell"/>
</dbReference>
<dbReference type="GO" id="GO:0003677">
    <property type="term" value="F:DNA binding"/>
    <property type="evidence" value="ECO:0000318"/>
    <property type="project" value="GO_Central"/>
</dbReference>
<dbReference type="GO" id="GO:0046982">
    <property type="term" value="F:protein heterodimerization activity"/>
    <property type="evidence" value="ECO:0007669"/>
    <property type="project" value="InterPro"/>
</dbReference>
<dbReference type="GO" id="GO:0030527">
    <property type="term" value="F:structural constituent of chromatin"/>
    <property type="evidence" value="ECO:0007669"/>
    <property type="project" value="InterPro"/>
</dbReference>
<dbReference type="CDD" id="cd22910">
    <property type="entry name" value="HFD_H2B"/>
    <property type="match status" value="1"/>
</dbReference>
<dbReference type="FunFam" id="1.10.20.10:FF:000014">
    <property type="entry name" value="Histone H2B"/>
    <property type="match status" value="1"/>
</dbReference>
<dbReference type="Gene3D" id="1.10.20.10">
    <property type="entry name" value="Histone, subunit A"/>
    <property type="match status" value="1"/>
</dbReference>
<dbReference type="InterPro" id="IPR009072">
    <property type="entry name" value="Histone-fold"/>
</dbReference>
<dbReference type="InterPro" id="IPR007125">
    <property type="entry name" value="Histone_H2A/H2B/H3"/>
</dbReference>
<dbReference type="InterPro" id="IPR000558">
    <property type="entry name" value="Histone_H2B"/>
</dbReference>
<dbReference type="InterPro" id="IPR055333">
    <property type="entry name" value="HISTONE_H2B_site"/>
</dbReference>
<dbReference type="PANTHER" id="PTHR23428">
    <property type="entry name" value="HISTONE H2B"/>
    <property type="match status" value="1"/>
</dbReference>
<dbReference type="Pfam" id="PF00125">
    <property type="entry name" value="Histone"/>
    <property type="match status" value="1"/>
</dbReference>
<dbReference type="PRINTS" id="PR00621">
    <property type="entry name" value="HISTONEH2B"/>
</dbReference>
<dbReference type="SMART" id="SM00427">
    <property type="entry name" value="H2B"/>
    <property type="match status" value="1"/>
</dbReference>
<dbReference type="SUPFAM" id="SSF47113">
    <property type="entry name" value="Histone-fold"/>
    <property type="match status" value="1"/>
</dbReference>
<dbReference type="PROSITE" id="PS00357">
    <property type="entry name" value="HISTONE_H2B"/>
    <property type="match status" value="1"/>
</dbReference>
<protein>
    <recommendedName>
        <fullName>Histone H2B.8</fullName>
    </recommendedName>
</protein>
<organism>
    <name type="scientific">Oryza sativa subsp. japonica</name>
    <name type="common">Rice</name>
    <dbReference type="NCBI Taxonomy" id="39947"/>
    <lineage>
        <taxon>Eukaryota</taxon>
        <taxon>Viridiplantae</taxon>
        <taxon>Streptophyta</taxon>
        <taxon>Embryophyta</taxon>
        <taxon>Tracheophyta</taxon>
        <taxon>Spermatophyta</taxon>
        <taxon>Magnoliopsida</taxon>
        <taxon>Liliopsida</taxon>
        <taxon>Poales</taxon>
        <taxon>Poaceae</taxon>
        <taxon>BOP clade</taxon>
        <taxon>Oryzoideae</taxon>
        <taxon>Oryzeae</taxon>
        <taxon>Oryzinae</taxon>
        <taxon>Oryza</taxon>
        <taxon>Oryza sativa</taxon>
    </lineage>
</organism>
<keyword id="KW-0007">Acetylation</keyword>
<keyword id="KW-0158">Chromosome</keyword>
<keyword id="KW-0238">DNA-binding</keyword>
<keyword id="KW-1017">Isopeptide bond</keyword>
<keyword id="KW-0544">Nucleosome core</keyword>
<keyword id="KW-0539">Nucleus</keyword>
<keyword id="KW-1185">Reference proteome</keyword>
<keyword id="KW-0832">Ubl conjugation</keyword>
<reference key="1">
    <citation type="journal article" date="2002" name="Nature">
        <title>The genome sequence and structure of rice chromosome 1.</title>
        <authorList>
            <person name="Sasaki T."/>
            <person name="Matsumoto T."/>
            <person name="Yamamoto K."/>
            <person name="Sakata K."/>
            <person name="Baba T."/>
            <person name="Katayose Y."/>
            <person name="Wu J."/>
            <person name="Niimura Y."/>
            <person name="Cheng Z."/>
            <person name="Nagamura Y."/>
            <person name="Antonio B.A."/>
            <person name="Kanamori H."/>
            <person name="Hosokawa S."/>
            <person name="Masukawa M."/>
            <person name="Arikawa K."/>
            <person name="Chiden Y."/>
            <person name="Hayashi M."/>
            <person name="Okamoto M."/>
            <person name="Ando T."/>
            <person name="Aoki H."/>
            <person name="Arita K."/>
            <person name="Hamada M."/>
            <person name="Harada C."/>
            <person name="Hijishita S."/>
            <person name="Honda M."/>
            <person name="Ichikawa Y."/>
            <person name="Idonuma A."/>
            <person name="Iijima M."/>
            <person name="Ikeda M."/>
            <person name="Ikeno M."/>
            <person name="Ito S."/>
            <person name="Ito T."/>
            <person name="Ito Y."/>
            <person name="Ito Y."/>
            <person name="Iwabuchi A."/>
            <person name="Kamiya K."/>
            <person name="Karasawa W."/>
            <person name="Katagiri S."/>
            <person name="Kikuta A."/>
            <person name="Kobayashi N."/>
            <person name="Kono I."/>
            <person name="Machita K."/>
            <person name="Maehara T."/>
            <person name="Mizuno H."/>
            <person name="Mizubayashi T."/>
            <person name="Mukai Y."/>
            <person name="Nagasaki H."/>
            <person name="Nakashima M."/>
            <person name="Nakama Y."/>
            <person name="Nakamichi Y."/>
            <person name="Nakamura M."/>
            <person name="Namiki N."/>
            <person name="Negishi M."/>
            <person name="Ohta I."/>
            <person name="Ono N."/>
            <person name="Saji S."/>
            <person name="Sakai K."/>
            <person name="Shibata M."/>
            <person name="Shimokawa T."/>
            <person name="Shomura A."/>
            <person name="Song J."/>
            <person name="Takazaki Y."/>
            <person name="Terasawa K."/>
            <person name="Tsuji K."/>
            <person name="Waki K."/>
            <person name="Yamagata H."/>
            <person name="Yamane H."/>
            <person name="Yoshiki S."/>
            <person name="Yoshihara R."/>
            <person name="Yukawa K."/>
            <person name="Zhong H."/>
            <person name="Iwama H."/>
            <person name="Endo T."/>
            <person name="Ito H."/>
            <person name="Hahn J.H."/>
            <person name="Kim H.-I."/>
            <person name="Eun M.-Y."/>
            <person name="Yano M."/>
            <person name="Jiang J."/>
            <person name="Gojobori T."/>
        </authorList>
    </citation>
    <scope>NUCLEOTIDE SEQUENCE [LARGE SCALE GENOMIC DNA]</scope>
    <source>
        <strain>cv. Nipponbare</strain>
    </source>
</reference>
<reference key="2">
    <citation type="journal article" date="2005" name="Nature">
        <title>The map-based sequence of the rice genome.</title>
        <authorList>
            <consortium name="International rice genome sequencing project (IRGSP)"/>
        </authorList>
    </citation>
    <scope>NUCLEOTIDE SEQUENCE [LARGE SCALE GENOMIC DNA]</scope>
    <source>
        <strain>cv. Nipponbare</strain>
    </source>
</reference>
<reference key="3">
    <citation type="journal article" date="2013" name="Rice">
        <title>Improvement of the Oryza sativa Nipponbare reference genome using next generation sequence and optical map data.</title>
        <authorList>
            <person name="Kawahara Y."/>
            <person name="de la Bastide M."/>
            <person name="Hamilton J.P."/>
            <person name="Kanamori H."/>
            <person name="McCombie W.R."/>
            <person name="Ouyang S."/>
            <person name="Schwartz D.C."/>
            <person name="Tanaka T."/>
            <person name="Wu J."/>
            <person name="Zhou S."/>
            <person name="Childs K.L."/>
            <person name="Davidson R.M."/>
            <person name="Lin H."/>
            <person name="Quesada-Ocampo L."/>
            <person name="Vaillancourt B."/>
            <person name="Sakai H."/>
            <person name="Lee S.S."/>
            <person name="Kim J."/>
            <person name="Numa H."/>
            <person name="Itoh T."/>
            <person name="Buell C.R."/>
            <person name="Matsumoto T."/>
        </authorList>
    </citation>
    <scope>GENOME REANNOTATION</scope>
    <source>
        <strain>cv. Nipponbare</strain>
    </source>
</reference>
<reference key="4">
    <citation type="journal article" date="2005" name="PLoS Biol.">
        <title>The genomes of Oryza sativa: a history of duplications.</title>
        <authorList>
            <person name="Yu J."/>
            <person name="Wang J."/>
            <person name="Lin W."/>
            <person name="Li S."/>
            <person name="Li H."/>
            <person name="Zhou J."/>
            <person name="Ni P."/>
            <person name="Dong W."/>
            <person name="Hu S."/>
            <person name="Zeng C."/>
            <person name="Zhang J."/>
            <person name="Zhang Y."/>
            <person name="Li R."/>
            <person name="Xu Z."/>
            <person name="Li S."/>
            <person name="Li X."/>
            <person name="Zheng H."/>
            <person name="Cong L."/>
            <person name="Lin L."/>
            <person name="Yin J."/>
            <person name="Geng J."/>
            <person name="Li G."/>
            <person name="Shi J."/>
            <person name="Liu J."/>
            <person name="Lv H."/>
            <person name="Li J."/>
            <person name="Wang J."/>
            <person name="Deng Y."/>
            <person name="Ran L."/>
            <person name="Shi X."/>
            <person name="Wang X."/>
            <person name="Wu Q."/>
            <person name="Li C."/>
            <person name="Ren X."/>
            <person name="Wang J."/>
            <person name="Wang X."/>
            <person name="Li D."/>
            <person name="Liu D."/>
            <person name="Zhang X."/>
            <person name="Ji Z."/>
            <person name="Zhao W."/>
            <person name="Sun Y."/>
            <person name="Zhang Z."/>
            <person name="Bao J."/>
            <person name="Han Y."/>
            <person name="Dong L."/>
            <person name="Ji J."/>
            <person name="Chen P."/>
            <person name="Wu S."/>
            <person name="Liu J."/>
            <person name="Xiao Y."/>
            <person name="Bu D."/>
            <person name="Tan J."/>
            <person name="Yang L."/>
            <person name="Ye C."/>
            <person name="Zhang J."/>
            <person name="Xu J."/>
            <person name="Zhou Y."/>
            <person name="Yu Y."/>
            <person name="Zhang B."/>
            <person name="Zhuang S."/>
            <person name="Wei H."/>
            <person name="Liu B."/>
            <person name="Lei M."/>
            <person name="Yu H."/>
            <person name="Li Y."/>
            <person name="Xu H."/>
            <person name="Wei S."/>
            <person name="He X."/>
            <person name="Fang L."/>
            <person name="Zhang Z."/>
            <person name="Zhang Y."/>
            <person name="Huang X."/>
            <person name="Su Z."/>
            <person name="Tong W."/>
            <person name="Li J."/>
            <person name="Tong Z."/>
            <person name="Li S."/>
            <person name="Ye J."/>
            <person name="Wang L."/>
            <person name="Fang L."/>
            <person name="Lei T."/>
            <person name="Chen C.-S."/>
            <person name="Chen H.-C."/>
            <person name="Xu Z."/>
            <person name="Li H."/>
            <person name="Huang H."/>
            <person name="Zhang F."/>
            <person name="Xu H."/>
            <person name="Li N."/>
            <person name="Zhao C."/>
            <person name="Li S."/>
            <person name="Dong L."/>
            <person name="Huang Y."/>
            <person name="Li L."/>
            <person name="Xi Y."/>
            <person name="Qi Q."/>
            <person name="Li W."/>
            <person name="Zhang B."/>
            <person name="Hu W."/>
            <person name="Zhang Y."/>
            <person name="Tian X."/>
            <person name="Jiao Y."/>
            <person name="Liang X."/>
            <person name="Jin J."/>
            <person name="Gao L."/>
            <person name="Zheng W."/>
            <person name="Hao B."/>
            <person name="Liu S.-M."/>
            <person name="Wang W."/>
            <person name="Yuan L."/>
            <person name="Cao M."/>
            <person name="McDermott J."/>
            <person name="Samudrala R."/>
            <person name="Wang J."/>
            <person name="Wong G.K.-S."/>
            <person name="Yang H."/>
        </authorList>
    </citation>
    <scope>NUCLEOTIDE SEQUENCE [LARGE SCALE GENOMIC DNA]</scope>
    <source>
        <strain>cv. Nipponbare</strain>
    </source>
</reference>
<evidence type="ECO:0000250" key="1"/>
<evidence type="ECO:0000256" key="2">
    <source>
        <dbReference type="SAM" id="MobiDB-lite"/>
    </source>
</evidence>
<evidence type="ECO:0000305" key="3"/>
<sequence length="153" mass="16488">MAPKAEKKPAAKKPAEEEPAAEKAEKAPAGKKPKAEKRLPAGKGEKGSGEGKKAGRKKAKKSVETYKIYIFKVLKQVHPDIGISSKAMSIMNSFINDIFEKLAGESAKLARYNKKPTITSREIQTAVRLVLPGELAKHAVSEGTKAVTKFTSS</sequence>
<accession>Q9LGH8</accession>